<keyword id="KW-0963">Cytoplasm</keyword>
<keyword id="KW-0460">Magnesium</keyword>
<keyword id="KW-0479">Metal-binding</keyword>
<keyword id="KW-0566">Pantothenate biosynthesis</keyword>
<keyword id="KW-1185">Reference proteome</keyword>
<keyword id="KW-0808">Transferase</keyword>
<organism>
    <name type="scientific">Helicobacter pylori (strain ATCC 700392 / 26695)</name>
    <name type="common">Campylobacter pylori</name>
    <dbReference type="NCBI Taxonomy" id="85962"/>
    <lineage>
        <taxon>Bacteria</taxon>
        <taxon>Pseudomonadati</taxon>
        <taxon>Campylobacterota</taxon>
        <taxon>Epsilonproteobacteria</taxon>
        <taxon>Campylobacterales</taxon>
        <taxon>Helicobacteraceae</taxon>
        <taxon>Helicobacter</taxon>
    </lineage>
</organism>
<accession>O25698</accession>
<sequence length="270" mass="29920">MSMQTAPIKKITLNHLQAKKNQEKIIAITAYDALFAQIFDPLVDVILVGDSLNMSFFNQNDTLSASVEMMLYHTKAVCAGAKTPFIITDMPFGSYKDEKTALKNAIRVYKETQASAIKLEGGKEKAKLVKTLTNEGVIVVGHIGLMPQFVRLDGGYKIKGKNEEQQKKLLEDALSLEEAGVGLLVLEGITTPIAQKITQKIKIPTIGIGSGKDCDGQILVWSDMLGFFDSFKPKFVREYLKGKELIQNAIKQYADDVKKGNFPNELESYH</sequence>
<gene>
    <name evidence="1" type="primary">panB</name>
    <name type="ordered locus">HP_1058</name>
</gene>
<comment type="function">
    <text evidence="1">Catalyzes the reversible reaction in which hydroxymethyl group from 5,10-methylenetetrahydrofolate is transferred onto alpha-ketoisovalerate to form ketopantoate.</text>
</comment>
<comment type="catalytic activity">
    <reaction evidence="1">
        <text>3-methyl-2-oxobutanoate + (6R)-5,10-methylene-5,6,7,8-tetrahydrofolate + H2O = 2-dehydropantoate + (6S)-5,6,7,8-tetrahydrofolate</text>
        <dbReference type="Rhea" id="RHEA:11824"/>
        <dbReference type="ChEBI" id="CHEBI:11561"/>
        <dbReference type="ChEBI" id="CHEBI:11851"/>
        <dbReference type="ChEBI" id="CHEBI:15377"/>
        <dbReference type="ChEBI" id="CHEBI:15636"/>
        <dbReference type="ChEBI" id="CHEBI:57453"/>
        <dbReference type="EC" id="2.1.2.11"/>
    </reaction>
</comment>
<comment type="cofactor">
    <cofactor evidence="1">
        <name>Mg(2+)</name>
        <dbReference type="ChEBI" id="CHEBI:18420"/>
    </cofactor>
    <text evidence="1">Binds 1 Mg(2+) ion per subunit.</text>
</comment>
<comment type="pathway">
    <text evidence="1">Cofactor biosynthesis; (R)-pantothenate biosynthesis; (R)-pantoate from 3-methyl-2-oxobutanoate: step 1/2.</text>
</comment>
<comment type="subunit">
    <text evidence="1">Homodecamer; pentamer of dimers.</text>
</comment>
<comment type="subcellular location">
    <subcellularLocation>
        <location evidence="1">Cytoplasm</location>
    </subcellularLocation>
</comment>
<comment type="similarity">
    <text evidence="1">Belongs to the PanB family.</text>
</comment>
<dbReference type="EC" id="2.1.2.11" evidence="1"/>
<dbReference type="EMBL" id="AE000511">
    <property type="protein sequence ID" value="AAD08099.1"/>
    <property type="molecule type" value="Genomic_DNA"/>
</dbReference>
<dbReference type="PIR" id="B64652">
    <property type="entry name" value="B64652"/>
</dbReference>
<dbReference type="RefSeq" id="NP_207849.1">
    <property type="nucleotide sequence ID" value="NC_000915.1"/>
</dbReference>
<dbReference type="RefSeq" id="WP_000062669.1">
    <property type="nucleotide sequence ID" value="NC_018939.1"/>
</dbReference>
<dbReference type="SMR" id="O25698"/>
<dbReference type="FunCoup" id="O25698">
    <property type="interactions" value="319"/>
</dbReference>
<dbReference type="STRING" id="85962.HP_1058"/>
<dbReference type="PaxDb" id="85962-C694_05470"/>
<dbReference type="EnsemblBacteria" id="AAD08099">
    <property type="protein sequence ID" value="AAD08099"/>
    <property type="gene ID" value="HP_1058"/>
</dbReference>
<dbReference type="KEGG" id="heo:C694_05470"/>
<dbReference type="KEGG" id="hpy:HP_1058"/>
<dbReference type="PATRIC" id="fig|85962.47.peg.1137"/>
<dbReference type="eggNOG" id="COG0413">
    <property type="taxonomic scope" value="Bacteria"/>
</dbReference>
<dbReference type="InParanoid" id="O25698"/>
<dbReference type="OrthoDB" id="9781789at2"/>
<dbReference type="PhylomeDB" id="O25698"/>
<dbReference type="UniPathway" id="UPA00028">
    <property type="reaction ID" value="UER00003"/>
</dbReference>
<dbReference type="Proteomes" id="UP000000429">
    <property type="component" value="Chromosome"/>
</dbReference>
<dbReference type="GO" id="GO:0005737">
    <property type="term" value="C:cytoplasm"/>
    <property type="evidence" value="ECO:0000318"/>
    <property type="project" value="GO_Central"/>
</dbReference>
<dbReference type="GO" id="GO:0003864">
    <property type="term" value="F:3-methyl-2-oxobutanoate hydroxymethyltransferase activity"/>
    <property type="evidence" value="ECO:0000318"/>
    <property type="project" value="GO_Central"/>
</dbReference>
<dbReference type="GO" id="GO:0000287">
    <property type="term" value="F:magnesium ion binding"/>
    <property type="evidence" value="ECO:0000318"/>
    <property type="project" value="GO_Central"/>
</dbReference>
<dbReference type="GO" id="GO:0015940">
    <property type="term" value="P:pantothenate biosynthetic process"/>
    <property type="evidence" value="ECO:0000318"/>
    <property type="project" value="GO_Central"/>
</dbReference>
<dbReference type="CDD" id="cd06557">
    <property type="entry name" value="KPHMT-like"/>
    <property type="match status" value="1"/>
</dbReference>
<dbReference type="FunFam" id="3.20.20.60:FF:000041">
    <property type="entry name" value="3-methyl-2-oxobutanoate hydroxymethyltransferase"/>
    <property type="match status" value="1"/>
</dbReference>
<dbReference type="Gene3D" id="3.20.20.60">
    <property type="entry name" value="Phosphoenolpyruvate-binding domains"/>
    <property type="match status" value="1"/>
</dbReference>
<dbReference type="HAMAP" id="MF_00156">
    <property type="entry name" value="PanB"/>
    <property type="match status" value="1"/>
</dbReference>
<dbReference type="InterPro" id="IPR003700">
    <property type="entry name" value="Pantoate_hydroxy_MeTrfase"/>
</dbReference>
<dbReference type="InterPro" id="IPR015813">
    <property type="entry name" value="Pyrv/PenolPyrv_kinase-like_dom"/>
</dbReference>
<dbReference type="InterPro" id="IPR040442">
    <property type="entry name" value="Pyrv_kinase-like_dom_sf"/>
</dbReference>
<dbReference type="NCBIfam" id="TIGR00222">
    <property type="entry name" value="panB"/>
    <property type="match status" value="1"/>
</dbReference>
<dbReference type="NCBIfam" id="NF001452">
    <property type="entry name" value="PRK00311.1"/>
    <property type="match status" value="1"/>
</dbReference>
<dbReference type="PANTHER" id="PTHR20881">
    <property type="entry name" value="3-METHYL-2-OXOBUTANOATE HYDROXYMETHYLTRANSFERASE"/>
    <property type="match status" value="1"/>
</dbReference>
<dbReference type="PANTHER" id="PTHR20881:SF0">
    <property type="entry name" value="3-METHYL-2-OXOBUTANOATE HYDROXYMETHYLTRANSFERASE"/>
    <property type="match status" value="1"/>
</dbReference>
<dbReference type="Pfam" id="PF02548">
    <property type="entry name" value="Pantoate_transf"/>
    <property type="match status" value="1"/>
</dbReference>
<dbReference type="PIRSF" id="PIRSF000388">
    <property type="entry name" value="Pantoate_hydroxy_MeTrfase"/>
    <property type="match status" value="1"/>
</dbReference>
<dbReference type="SUPFAM" id="SSF51621">
    <property type="entry name" value="Phosphoenolpyruvate/pyruvate domain"/>
    <property type="match status" value="1"/>
</dbReference>
<feature type="chain" id="PRO_0000184850" description="3-methyl-2-oxobutanoate hydroxymethyltransferase">
    <location>
        <begin position="1"/>
        <end position="270"/>
    </location>
</feature>
<feature type="active site" description="Proton acceptor" evidence="1">
    <location>
        <position position="187"/>
    </location>
</feature>
<feature type="binding site" evidence="1">
    <location>
        <begin position="50"/>
        <end position="51"/>
    </location>
    <ligand>
        <name>3-methyl-2-oxobutanoate</name>
        <dbReference type="ChEBI" id="CHEBI:11851"/>
    </ligand>
</feature>
<feature type="binding site" evidence="1">
    <location>
        <position position="50"/>
    </location>
    <ligand>
        <name>Mg(2+)</name>
        <dbReference type="ChEBI" id="CHEBI:18420"/>
    </ligand>
</feature>
<feature type="binding site" evidence="1">
    <location>
        <position position="89"/>
    </location>
    <ligand>
        <name>3-methyl-2-oxobutanoate</name>
        <dbReference type="ChEBI" id="CHEBI:11851"/>
    </ligand>
</feature>
<feature type="binding site" evidence="1">
    <location>
        <position position="89"/>
    </location>
    <ligand>
        <name>Mg(2+)</name>
        <dbReference type="ChEBI" id="CHEBI:18420"/>
    </ligand>
</feature>
<feature type="binding site" evidence="1">
    <location>
        <position position="118"/>
    </location>
    <ligand>
        <name>3-methyl-2-oxobutanoate</name>
        <dbReference type="ChEBI" id="CHEBI:11851"/>
    </ligand>
</feature>
<feature type="binding site" evidence="1">
    <location>
        <position position="120"/>
    </location>
    <ligand>
        <name>Mg(2+)</name>
        <dbReference type="ChEBI" id="CHEBI:18420"/>
    </ligand>
</feature>
<name>PANB_HELPY</name>
<protein>
    <recommendedName>
        <fullName evidence="1">3-methyl-2-oxobutanoate hydroxymethyltransferase</fullName>
        <ecNumber evidence="1">2.1.2.11</ecNumber>
    </recommendedName>
    <alternativeName>
        <fullName evidence="1">Ketopantoate hydroxymethyltransferase</fullName>
        <shortName evidence="1">KPHMT</shortName>
    </alternativeName>
</protein>
<reference key="1">
    <citation type="journal article" date="1997" name="Nature">
        <title>The complete genome sequence of the gastric pathogen Helicobacter pylori.</title>
        <authorList>
            <person name="Tomb J.-F."/>
            <person name="White O."/>
            <person name="Kerlavage A.R."/>
            <person name="Clayton R.A."/>
            <person name="Sutton G.G."/>
            <person name="Fleischmann R.D."/>
            <person name="Ketchum K.A."/>
            <person name="Klenk H.-P."/>
            <person name="Gill S.R."/>
            <person name="Dougherty B.A."/>
            <person name="Nelson K.E."/>
            <person name="Quackenbush J."/>
            <person name="Zhou L."/>
            <person name="Kirkness E.F."/>
            <person name="Peterson S.N."/>
            <person name="Loftus B.J."/>
            <person name="Richardson D.L."/>
            <person name="Dodson R.J."/>
            <person name="Khalak H.G."/>
            <person name="Glodek A."/>
            <person name="McKenney K."/>
            <person name="FitzGerald L.M."/>
            <person name="Lee N."/>
            <person name="Adams M.D."/>
            <person name="Hickey E.K."/>
            <person name="Berg D.E."/>
            <person name="Gocayne J.D."/>
            <person name="Utterback T.R."/>
            <person name="Peterson J.D."/>
            <person name="Kelley J.M."/>
            <person name="Cotton M.D."/>
            <person name="Weidman J.F."/>
            <person name="Fujii C."/>
            <person name="Bowman C."/>
            <person name="Watthey L."/>
            <person name="Wallin E."/>
            <person name="Hayes W.S."/>
            <person name="Borodovsky M."/>
            <person name="Karp P.D."/>
            <person name="Smith H.O."/>
            <person name="Fraser C.M."/>
            <person name="Venter J.C."/>
        </authorList>
    </citation>
    <scope>NUCLEOTIDE SEQUENCE [LARGE SCALE GENOMIC DNA]</scope>
    <source>
        <strain>ATCC 700392 / 26695</strain>
    </source>
</reference>
<proteinExistence type="inferred from homology"/>
<evidence type="ECO:0000255" key="1">
    <source>
        <dbReference type="HAMAP-Rule" id="MF_00156"/>
    </source>
</evidence>